<sequence>MARVTVQDAVEKIGNRFDLVLVAARRARQMQVGGKDPLVPEENDKTTVIALREIEEGLINNQILDVRERQEQQEQEAAELQAVTAIAEGRR</sequence>
<gene>
    <name evidence="1" type="primary">rpoZ</name>
    <name type="ordered locus">E2348C_3913</name>
</gene>
<evidence type="ECO:0000255" key="1">
    <source>
        <dbReference type="HAMAP-Rule" id="MF_00366"/>
    </source>
</evidence>
<name>RPOZ_ECO27</name>
<dbReference type="EC" id="2.7.7.6" evidence="1"/>
<dbReference type="EMBL" id="FM180568">
    <property type="protein sequence ID" value="CAS11461.1"/>
    <property type="molecule type" value="Genomic_DNA"/>
</dbReference>
<dbReference type="RefSeq" id="WP_000135058.1">
    <property type="nucleotide sequence ID" value="NC_011601.1"/>
</dbReference>
<dbReference type="SMR" id="B7UM71"/>
<dbReference type="GeneID" id="98390719"/>
<dbReference type="KEGG" id="ecg:E2348C_3913"/>
<dbReference type="HOGENOM" id="CLU_125406_5_3_6"/>
<dbReference type="Proteomes" id="UP000008205">
    <property type="component" value="Chromosome"/>
</dbReference>
<dbReference type="GO" id="GO:0000428">
    <property type="term" value="C:DNA-directed RNA polymerase complex"/>
    <property type="evidence" value="ECO:0007669"/>
    <property type="project" value="UniProtKB-KW"/>
</dbReference>
<dbReference type="GO" id="GO:0003677">
    <property type="term" value="F:DNA binding"/>
    <property type="evidence" value="ECO:0007669"/>
    <property type="project" value="UniProtKB-UniRule"/>
</dbReference>
<dbReference type="GO" id="GO:0003899">
    <property type="term" value="F:DNA-directed RNA polymerase activity"/>
    <property type="evidence" value="ECO:0007669"/>
    <property type="project" value="UniProtKB-UniRule"/>
</dbReference>
<dbReference type="GO" id="GO:0006351">
    <property type="term" value="P:DNA-templated transcription"/>
    <property type="evidence" value="ECO:0007669"/>
    <property type="project" value="UniProtKB-UniRule"/>
</dbReference>
<dbReference type="FunFam" id="3.90.940.10:FF:000001">
    <property type="entry name" value="DNA-directed RNA polymerase subunit omega"/>
    <property type="match status" value="1"/>
</dbReference>
<dbReference type="Gene3D" id="3.90.940.10">
    <property type="match status" value="1"/>
</dbReference>
<dbReference type="HAMAP" id="MF_00366">
    <property type="entry name" value="RNApol_bact_RpoZ"/>
    <property type="match status" value="1"/>
</dbReference>
<dbReference type="InterPro" id="IPR003716">
    <property type="entry name" value="DNA-dir_RNA_pol_omega"/>
</dbReference>
<dbReference type="InterPro" id="IPR006110">
    <property type="entry name" value="Pol_omega/Rpo6/RPB6"/>
</dbReference>
<dbReference type="InterPro" id="IPR036161">
    <property type="entry name" value="RPB6/omega-like_sf"/>
</dbReference>
<dbReference type="NCBIfam" id="TIGR00690">
    <property type="entry name" value="rpoZ"/>
    <property type="match status" value="1"/>
</dbReference>
<dbReference type="PANTHER" id="PTHR34476">
    <property type="entry name" value="DNA-DIRECTED RNA POLYMERASE SUBUNIT OMEGA"/>
    <property type="match status" value="1"/>
</dbReference>
<dbReference type="PANTHER" id="PTHR34476:SF1">
    <property type="entry name" value="DNA-DIRECTED RNA POLYMERASE SUBUNIT OMEGA"/>
    <property type="match status" value="1"/>
</dbReference>
<dbReference type="Pfam" id="PF01192">
    <property type="entry name" value="RNA_pol_Rpb6"/>
    <property type="match status" value="1"/>
</dbReference>
<dbReference type="SMART" id="SM01409">
    <property type="entry name" value="RNA_pol_Rpb6"/>
    <property type="match status" value="1"/>
</dbReference>
<dbReference type="SUPFAM" id="SSF63562">
    <property type="entry name" value="RPB6/omega subunit-like"/>
    <property type="match status" value="1"/>
</dbReference>
<organism>
    <name type="scientific">Escherichia coli O127:H6 (strain E2348/69 / EPEC)</name>
    <dbReference type="NCBI Taxonomy" id="574521"/>
    <lineage>
        <taxon>Bacteria</taxon>
        <taxon>Pseudomonadati</taxon>
        <taxon>Pseudomonadota</taxon>
        <taxon>Gammaproteobacteria</taxon>
        <taxon>Enterobacterales</taxon>
        <taxon>Enterobacteriaceae</taxon>
        <taxon>Escherichia</taxon>
    </lineage>
</organism>
<accession>B7UM71</accession>
<reference key="1">
    <citation type="journal article" date="2009" name="J. Bacteriol.">
        <title>Complete genome sequence and comparative genome analysis of enteropathogenic Escherichia coli O127:H6 strain E2348/69.</title>
        <authorList>
            <person name="Iguchi A."/>
            <person name="Thomson N.R."/>
            <person name="Ogura Y."/>
            <person name="Saunders D."/>
            <person name="Ooka T."/>
            <person name="Henderson I.R."/>
            <person name="Harris D."/>
            <person name="Asadulghani M."/>
            <person name="Kurokawa K."/>
            <person name="Dean P."/>
            <person name="Kenny B."/>
            <person name="Quail M.A."/>
            <person name="Thurston S."/>
            <person name="Dougan G."/>
            <person name="Hayashi T."/>
            <person name="Parkhill J."/>
            <person name="Frankel G."/>
        </authorList>
    </citation>
    <scope>NUCLEOTIDE SEQUENCE [LARGE SCALE GENOMIC DNA]</scope>
    <source>
        <strain>E2348/69 / EPEC</strain>
    </source>
</reference>
<proteinExistence type="inferred from homology"/>
<keyword id="KW-0240">DNA-directed RNA polymerase</keyword>
<keyword id="KW-0548">Nucleotidyltransferase</keyword>
<keyword id="KW-1185">Reference proteome</keyword>
<keyword id="KW-0804">Transcription</keyword>
<keyword id="KW-0808">Transferase</keyword>
<protein>
    <recommendedName>
        <fullName evidence="1">DNA-directed RNA polymerase subunit omega</fullName>
        <shortName evidence="1">RNAP omega subunit</shortName>
        <ecNumber evidence="1">2.7.7.6</ecNumber>
    </recommendedName>
    <alternativeName>
        <fullName evidence="1">RNA polymerase omega subunit</fullName>
    </alternativeName>
    <alternativeName>
        <fullName evidence="1">Transcriptase subunit omega</fullName>
    </alternativeName>
</protein>
<feature type="chain" id="PRO_1000194794" description="DNA-directed RNA polymerase subunit omega">
    <location>
        <begin position="1"/>
        <end position="91"/>
    </location>
</feature>
<comment type="function">
    <text evidence="1">Promotes RNA polymerase assembly. Latches the N- and C-terminal regions of the beta' subunit thereby facilitating its interaction with the beta and alpha subunits.</text>
</comment>
<comment type="catalytic activity">
    <reaction evidence="1">
        <text>RNA(n) + a ribonucleoside 5'-triphosphate = RNA(n+1) + diphosphate</text>
        <dbReference type="Rhea" id="RHEA:21248"/>
        <dbReference type="Rhea" id="RHEA-COMP:14527"/>
        <dbReference type="Rhea" id="RHEA-COMP:17342"/>
        <dbReference type="ChEBI" id="CHEBI:33019"/>
        <dbReference type="ChEBI" id="CHEBI:61557"/>
        <dbReference type="ChEBI" id="CHEBI:140395"/>
        <dbReference type="EC" id="2.7.7.6"/>
    </reaction>
</comment>
<comment type="subunit">
    <text evidence="1">The RNAP catalytic core consists of 2 alpha, 1 beta, 1 beta' and 1 omega subunit. When a sigma factor is associated with the core the holoenzyme is formed, which can initiate transcription.</text>
</comment>
<comment type="similarity">
    <text evidence="1">Belongs to the RNA polymerase subunit omega family.</text>
</comment>